<sequence>MARVKRGVIARARHKKILKQAKGYYGARSRVYRVAFQAVIKAGQYAYRDRRQRKRQFRQLWIARINAAARQNGISYSKFINGLKKASVEIDRKILADIAVFDKVAFTALVEKAKAALA</sequence>
<dbReference type="EMBL" id="AL513382">
    <property type="protein sequence ID" value="CAD02017.1"/>
    <property type="molecule type" value="Genomic_DNA"/>
</dbReference>
<dbReference type="EMBL" id="AE014613">
    <property type="protein sequence ID" value="AAO68871.1"/>
    <property type="molecule type" value="Genomic_DNA"/>
</dbReference>
<dbReference type="RefSeq" id="NP_456176.1">
    <property type="nucleotide sequence ID" value="NC_003198.1"/>
</dbReference>
<dbReference type="RefSeq" id="WP_000124850.1">
    <property type="nucleotide sequence ID" value="NZ_WSUR01000011.1"/>
</dbReference>
<dbReference type="SMR" id="P0A7L7"/>
<dbReference type="STRING" id="220341.gene:17585709"/>
<dbReference type="GeneID" id="98388757"/>
<dbReference type="KEGG" id="stt:t1216"/>
<dbReference type="KEGG" id="sty:STY1775"/>
<dbReference type="PATRIC" id="fig|220341.7.peg.1786"/>
<dbReference type="eggNOG" id="COG0292">
    <property type="taxonomic scope" value="Bacteria"/>
</dbReference>
<dbReference type="HOGENOM" id="CLU_123265_0_1_6"/>
<dbReference type="OMA" id="GRRKNVW"/>
<dbReference type="OrthoDB" id="9808966at2"/>
<dbReference type="Proteomes" id="UP000000541">
    <property type="component" value="Chromosome"/>
</dbReference>
<dbReference type="Proteomes" id="UP000002670">
    <property type="component" value="Chromosome"/>
</dbReference>
<dbReference type="GO" id="GO:1990904">
    <property type="term" value="C:ribonucleoprotein complex"/>
    <property type="evidence" value="ECO:0007669"/>
    <property type="project" value="UniProtKB-KW"/>
</dbReference>
<dbReference type="GO" id="GO:0005840">
    <property type="term" value="C:ribosome"/>
    <property type="evidence" value="ECO:0007669"/>
    <property type="project" value="UniProtKB-KW"/>
</dbReference>
<dbReference type="GO" id="GO:0019843">
    <property type="term" value="F:rRNA binding"/>
    <property type="evidence" value="ECO:0007669"/>
    <property type="project" value="UniProtKB-UniRule"/>
</dbReference>
<dbReference type="GO" id="GO:0003735">
    <property type="term" value="F:structural constituent of ribosome"/>
    <property type="evidence" value="ECO:0007669"/>
    <property type="project" value="InterPro"/>
</dbReference>
<dbReference type="GO" id="GO:0000027">
    <property type="term" value="P:ribosomal large subunit assembly"/>
    <property type="evidence" value="ECO:0007669"/>
    <property type="project" value="UniProtKB-UniRule"/>
</dbReference>
<dbReference type="GO" id="GO:0006412">
    <property type="term" value="P:translation"/>
    <property type="evidence" value="ECO:0007669"/>
    <property type="project" value="InterPro"/>
</dbReference>
<dbReference type="CDD" id="cd07026">
    <property type="entry name" value="Ribosomal_L20"/>
    <property type="match status" value="1"/>
</dbReference>
<dbReference type="FunFam" id="1.10.1900.20:FF:000001">
    <property type="entry name" value="50S ribosomal protein L20"/>
    <property type="match status" value="1"/>
</dbReference>
<dbReference type="Gene3D" id="6.10.160.10">
    <property type="match status" value="1"/>
</dbReference>
<dbReference type="Gene3D" id="1.10.1900.20">
    <property type="entry name" value="Ribosomal protein L20"/>
    <property type="match status" value="1"/>
</dbReference>
<dbReference type="HAMAP" id="MF_00382">
    <property type="entry name" value="Ribosomal_bL20"/>
    <property type="match status" value="1"/>
</dbReference>
<dbReference type="InterPro" id="IPR005813">
    <property type="entry name" value="Ribosomal_bL20"/>
</dbReference>
<dbReference type="InterPro" id="IPR049946">
    <property type="entry name" value="RIBOSOMAL_L20_CS"/>
</dbReference>
<dbReference type="InterPro" id="IPR035566">
    <property type="entry name" value="Ribosomal_protein_bL20_C"/>
</dbReference>
<dbReference type="NCBIfam" id="TIGR01032">
    <property type="entry name" value="rplT_bact"/>
    <property type="match status" value="1"/>
</dbReference>
<dbReference type="PANTHER" id="PTHR10986">
    <property type="entry name" value="39S RIBOSOMAL PROTEIN L20"/>
    <property type="match status" value="1"/>
</dbReference>
<dbReference type="Pfam" id="PF00453">
    <property type="entry name" value="Ribosomal_L20"/>
    <property type="match status" value="1"/>
</dbReference>
<dbReference type="PRINTS" id="PR00062">
    <property type="entry name" value="RIBOSOMALL20"/>
</dbReference>
<dbReference type="SUPFAM" id="SSF74731">
    <property type="entry name" value="Ribosomal protein L20"/>
    <property type="match status" value="1"/>
</dbReference>
<dbReference type="PROSITE" id="PS00937">
    <property type="entry name" value="RIBOSOMAL_L20"/>
    <property type="match status" value="1"/>
</dbReference>
<gene>
    <name type="primary">rplT</name>
    <name type="ordered locus">STY1775</name>
    <name type="ordered locus">t1216</name>
</gene>
<comment type="function">
    <text evidence="1">Binds directly to 23S ribosomal RNA and is necessary for the in vitro assembly process of the 50S ribosomal subunit. It is not involved in the protein synthesizing functions of that subunit (By similarity).</text>
</comment>
<comment type="similarity">
    <text evidence="2">Belongs to the bacterial ribosomal protein bL20 family.</text>
</comment>
<reference key="1">
    <citation type="journal article" date="2001" name="Nature">
        <title>Complete genome sequence of a multiple drug resistant Salmonella enterica serovar Typhi CT18.</title>
        <authorList>
            <person name="Parkhill J."/>
            <person name="Dougan G."/>
            <person name="James K.D."/>
            <person name="Thomson N.R."/>
            <person name="Pickard D."/>
            <person name="Wain J."/>
            <person name="Churcher C.M."/>
            <person name="Mungall K.L."/>
            <person name="Bentley S.D."/>
            <person name="Holden M.T.G."/>
            <person name="Sebaihia M."/>
            <person name="Baker S."/>
            <person name="Basham D."/>
            <person name="Brooks K."/>
            <person name="Chillingworth T."/>
            <person name="Connerton P."/>
            <person name="Cronin A."/>
            <person name="Davis P."/>
            <person name="Davies R.M."/>
            <person name="Dowd L."/>
            <person name="White N."/>
            <person name="Farrar J."/>
            <person name="Feltwell T."/>
            <person name="Hamlin N."/>
            <person name="Haque A."/>
            <person name="Hien T.T."/>
            <person name="Holroyd S."/>
            <person name="Jagels K."/>
            <person name="Krogh A."/>
            <person name="Larsen T.S."/>
            <person name="Leather S."/>
            <person name="Moule S."/>
            <person name="O'Gaora P."/>
            <person name="Parry C."/>
            <person name="Quail M.A."/>
            <person name="Rutherford K.M."/>
            <person name="Simmonds M."/>
            <person name="Skelton J."/>
            <person name="Stevens K."/>
            <person name="Whitehead S."/>
            <person name="Barrell B.G."/>
        </authorList>
    </citation>
    <scope>NUCLEOTIDE SEQUENCE [LARGE SCALE GENOMIC DNA]</scope>
    <source>
        <strain>CT18</strain>
    </source>
</reference>
<reference key="2">
    <citation type="journal article" date="2003" name="J. Bacteriol.">
        <title>Comparative genomics of Salmonella enterica serovar Typhi strains Ty2 and CT18.</title>
        <authorList>
            <person name="Deng W."/>
            <person name="Liou S.-R."/>
            <person name="Plunkett G. III"/>
            <person name="Mayhew G.F."/>
            <person name="Rose D.J."/>
            <person name="Burland V."/>
            <person name="Kodoyianni V."/>
            <person name="Schwartz D.C."/>
            <person name="Blattner F.R."/>
        </authorList>
    </citation>
    <scope>NUCLEOTIDE SEQUENCE [LARGE SCALE GENOMIC DNA]</scope>
    <source>
        <strain>ATCC 700931 / Ty2</strain>
    </source>
</reference>
<organism>
    <name type="scientific">Salmonella typhi</name>
    <dbReference type="NCBI Taxonomy" id="90370"/>
    <lineage>
        <taxon>Bacteria</taxon>
        <taxon>Pseudomonadati</taxon>
        <taxon>Pseudomonadota</taxon>
        <taxon>Gammaproteobacteria</taxon>
        <taxon>Enterobacterales</taxon>
        <taxon>Enterobacteriaceae</taxon>
        <taxon>Salmonella</taxon>
    </lineage>
</organism>
<proteinExistence type="inferred from homology"/>
<keyword id="KW-0687">Ribonucleoprotein</keyword>
<keyword id="KW-0689">Ribosomal protein</keyword>
<keyword id="KW-0694">RNA-binding</keyword>
<keyword id="KW-0699">rRNA-binding</keyword>
<name>RL20_SALTI</name>
<evidence type="ECO:0000250" key="1"/>
<evidence type="ECO:0000305" key="2"/>
<feature type="initiator methionine" description="Removed" evidence="1">
    <location>
        <position position="1"/>
    </location>
</feature>
<feature type="chain" id="PRO_0000177219" description="Large ribosomal subunit protein bL20">
    <location>
        <begin position="2"/>
        <end position="118"/>
    </location>
</feature>
<accession>P0A7L7</accession>
<accession>P02421</accession>
<accession>Q47253</accession>
<protein>
    <recommendedName>
        <fullName evidence="2">Large ribosomal subunit protein bL20</fullName>
    </recommendedName>
    <alternativeName>
        <fullName>50S ribosomal protein L20</fullName>
    </alternativeName>
</protein>